<dbReference type="EC" id="4.1.1.-" evidence="3"/>
<dbReference type="EMBL" id="CP007201">
    <property type="protein sequence ID" value="AHJ12804.1"/>
    <property type="molecule type" value="Genomic_DNA"/>
</dbReference>
<dbReference type="RefSeq" id="WP_025344678.1">
    <property type="nucleotide sequence ID" value="NZ_CP007201.1"/>
</dbReference>
<dbReference type="PDB" id="6OUX">
    <property type="method" value="X-ray"/>
    <property type="resolution" value="1.94 A"/>
    <property type="chains" value="A/B=2-392"/>
</dbReference>
<dbReference type="PDBsum" id="6OUX"/>
<dbReference type="SMR" id="P0DV65"/>
<dbReference type="KEGG" id="smul:SMUL_1544"/>
<dbReference type="Proteomes" id="UP000019322">
    <property type="component" value="Chromosome"/>
</dbReference>
<dbReference type="GO" id="GO:0016831">
    <property type="term" value="F:carboxy-lyase activity"/>
    <property type="evidence" value="ECO:0007669"/>
    <property type="project" value="UniProtKB-KW"/>
</dbReference>
<dbReference type="GO" id="GO:0030170">
    <property type="term" value="F:pyridoxal phosphate binding"/>
    <property type="evidence" value="ECO:0007669"/>
    <property type="project" value="InterPro"/>
</dbReference>
<dbReference type="GO" id="GO:0009058">
    <property type="term" value="P:biosynthetic process"/>
    <property type="evidence" value="ECO:0007669"/>
    <property type="project" value="InterPro"/>
</dbReference>
<dbReference type="CDD" id="cd00609">
    <property type="entry name" value="AAT_like"/>
    <property type="match status" value="1"/>
</dbReference>
<dbReference type="Gene3D" id="3.90.1150.10">
    <property type="entry name" value="Aspartate Aminotransferase, domain 1"/>
    <property type="match status" value="1"/>
</dbReference>
<dbReference type="Gene3D" id="3.40.640.10">
    <property type="entry name" value="Type I PLP-dependent aspartate aminotransferase-like (Major domain)"/>
    <property type="match status" value="1"/>
</dbReference>
<dbReference type="InterPro" id="IPR004839">
    <property type="entry name" value="Aminotransferase_I/II_large"/>
</dbReference>
<dbReference type="InterPro" id="IPR015424">
    <property type="entry name" value="PyrdxlP-dep_Trfase"/>
</dbReference>
<dbReference type="InterPro" id="IPR015421">
    <property type="entry name" value="PyrdxlP-dep_Trfase_major"/>
</dbReference>
<dbReference type="InterPro" id="IPR015422">
    <property type="entry name" value="PyrdxlP-dep_Trfase_small"/>
</dbReference>
<dbReference type="PANTHER" id="PTHR42885">
    <property type="entry name" value="HISTIDINOL-PHOSPHATE AMINOTRANSFERASE-RELATED"/>
    <property type="match status" value="1"/>
</dbReference>
<dbReference type="Pfam" id="PF00155">
    <property type="entry name" value="Aminotran_1_2"/>
    <property type="match status" value="1"/>
</dbReference>
<dbReference type="SUPFAM" id="SSF53383">
    <property type="entry name" value="PLP-dependent transferases"/>
    <property type="match status" value="1"/>
</dbReference>
<feature type="chain" id="PRO_0000455391" description="L-serine phosphate decarboxylase">
    <location>
        <begin position="1"/>
        <end position="392"/>
    </location>
</feature>
<feature type="region of interest" description="Required for catalytic activity" evidence="3">
    <location>
        <begin position="22"/>
        <end position="29"/>
    </location>
</feature>
<feature type="binding site" evidence="1">
    <location>
        <position position="180"/>
    </location>
    <ligand>
        <name>O-phospho-L-serine</name>
        <dbReference type="ChEBI" id="CHEBI:57524"/>
    </ligand>
</feature>
<feature type="binding site" evidence="1">
    <location>
        <position position="354"/>
    </location>
    <ligand>
        <name>O-phospho-L-serine</name>
        <dbReference type="ChEBI" id="CHEBI:57524"/>
    </ligand>
</feature>
<feature type="binding site" evidence="1">
    <location>
        <position position="368"/>
    </location>
    <ligand>
        <name>O-phospho-L-serine</name>
        <dbReference type="ChEBI" id="CHEBI:57524"/>
    </ligand>
</feature>
<feature type="modified residue" description="N6-(pyridoxal phosphate)lysine" evidence="1">
    <location>
        <position position="243"/>
    </location>
</feature>
<feature type="mutagenesis site" description="Loss of enzyme activity with L-serine phosphate and with L-threonine phosphate. No effect in pyridoxal phosphate (PLP)-binding." evidence="3">
    <location>
        <begin position="2"/>
        <end position="29"/>
    </location>
</feature>
<feature type="mutagenesis site" description="Decreased enzyme activity by about 30% compared to wild-type with L-serine phosphate. No effect on enzyme activity with L-threonine phosphate." evidence="3">
    <location>
        <begin position="2"/>
        <end position="21"/>
    </location>
</feature>
<feature type="mutagenesis site" description="Decreased enzyme activity by about 30% compared to wild-type with L-serine phosphate. No effect on enzyme activity with L-threonine phosphate." evidence="3">
    <location>
        <begin position="2"/>
        <end position="16"/>
    </location>
</feature>
<feature type="mutagenesis site" description="Decreased enzyme activity by about 30% compared to wild-type with L-serine phosphate. No effect on enzyme activity with L-threonine phosphate." evidence="3">
    <location>
        <begin position="2"/>
        <end position="11"/>
    </location>
</feature>
<feature type="mutagenesis site" description="No effect on enzyme activity with L-serine phosphate or with L-threonine phosphate." evidence="3">
    <location>
        <begin position="2"/>
        <end position="6"/>
    </location>
</feature>
<feature type="mutagenesis site" description="Significantly decreased enzyme activity. No effect in pyridoxal phosphate (PLP)-binding." evidence="3">
    <original>H</original>
    <variation>A</variation>
    <location>
        <position position="26"/>
    </location>
</feature>
<feature type="mutagenesis site" description="Increased enzyme activity with of L-threonine phosphate and a decreased activity with L-serine phosphate. Exhibits similar activity rates with both substrates." evidence="3">
    <original>S</original>
    <variation>T</variation>
    <location>
        <position position="242"/>
    </location>
</feature>
<proteinExistence type="evidence at protein level"/>
<organism>
    <name type="scientific">Sulfurospirillum multivorans (strain DM 12446 / JCM 15788 / NBRC 109480)</name>
    <dbReference type="NCBI Taxonomy" id="1150621"/>
    <lineage>
        <taxon>Bacteria</taxon>
        <taxon>Pseudomonadati</taxon>
        <taxon>Campylobacterota</taxon>
        <taxon>Epsilonproteobacteria</taxon>
        <taxon>Campylobacterales</taxon>
        <taxon>Sulfurospirillaceae</taxon>
        <taxon>Sulfurospirillum</taxon>
    </lineage>
</organism>
<keyword id="KW-0002">3D-structure</keyword>
<keyword id="KW-0210">Decarboxylase</keyword>
<keyword id="KW-0456">Lyase</keyword>
<keyword id="KW-0663">Pyridoxal phosphate</keyword>
<accession>P0DV65</accession>
<sequence length="392" mass="45043">MVDTMNARNTQFTKAFHALKQNAGSHSPSMEDLKKMFPTLEIKIDACYLSNPYASELVLDYIDRELIQTNAYKKVLTHYPSQQRSLQKVMAESLHVKPENIFIGNGATEIIQMLLQQEEVQKVALMIPTFSSYYEFVGKGCEVVYFPLNERDDYSFDADKYCQFIENEQPDTVVLINPNNPNGAYLSLEKMHILLKRLAFVPRIIIDESFIHFAYEDEALTCLSSTVLFDMYPNVIIVKSLSKDFGIAGVRLGYALMDSRKIDALLEHGFLWNINGIGEYCLRLFVREDFLKRYEEARKQYIKEMCRFKEALLGIENVYVYPSMANFVMLKLPSRIKASFVISALLVEYGIYVRTMADKIGVEGECIRIAGRTREENNCIVMALKSILKDSK</sequence>
<name>S1544_SULMK</name>
<protein>
    <recommendedName>
        <fullName evidence="6">L-serine phosphate decarboxylase</fullName>
        <ecNumber evidence="3">4.1.1.-</ecNumber>
    </recommendedName>
    <alternativeName>
        <fullName evidence="5">CobD homolog SMUL_1544</fullName>
        <shortName evidence="5">SmCobD</shortName>
    </alternativeName>
    <alternativeName>
        <fullName evidence="5">L-serine O-phosphate decarboxylase</fullName>
        <shortName evidence="4 5">L-Ser-P decarboxylase</shortName>
    </alternativeName>
    <alternativeName>
        <fullName evidence="4">Norcobamide biosynthesis protein SMUL_1544</fullName>
    </alternativeName>
    <alternativeName>
        <fullName evidence="8">Threonine phosphate decarboxylase-like enzyme</fullName>
    </alternativeName>
</protein>
<evidence type="ECO:0000250" key="1">
    <source>
        <dbReference type="UniProtKB" id="P97084"/>
    </source>
</evidence>
<evidence type="ECO:0000269" key="2">
    <source>
    </source>
</evidence>
<evidence type="ECO:0000269" key="3">
    <source>
    </source>
</evidence>
<evidence type="ECO:0000303" key="4">
    <source>
    </source>
</evidence>
<evidence type="ECO:0000303" key="5">
    <source>
    </source>
</evidence>
<evidence type="ECO:0000305" key="6"/>
<evidence type="ECO:0000305" key="7">
    <source>
    </source>
</evidence>
<evidence type="ECO:0000312" key="8">
    <source>
        <dbReference type="EMBL" id="AHJ12804.1"/>
    </source>
</evidence>
<evidence type="ECO:0007744" key="9">
    <source>
        <dbReference type="PDB" id="6OUX"/>
    </source>
</evidence>
<gene>
    <name evidence="4 5 8" type="ORF">SMUL_1544</name>
</gene>
<reference evidence="8" key="1">
    <citation type="journal article" date="2014" name="Environ. Microbiol.">
        <title>Insights into organohalide respiration and the versatile catabolism of Sulfurospirillum multivorans gained from comparative genomics and physiological studies.</title>
        <authorList>
            <person name="Goris T."/>
            <person name="Schubert T."/>
            <person name="Gadkari J."/>
            <person name="Wubet T."/>
            <person name="Tarkka M."/>
            <person name="Buscot F."/>
            <person name="Adrian L."/>
            <person name="Diekert G."/>
        </authorList>
    </citation>
    <scope>NUCLEOTIDE SEQUENCE [LARGE SCALE GENOMIC DNA]</scope>
    <source>
        <strain evidence="8">DM 12446 / JCM 15788 / NBRC 109480</strain>
    </source>
</reference>
<reference key="2">
    <citation type="journal article" date="2016" name="J. Bacteriol.">
        <title>The SMUL_1544 Gene Product Governs Norcobamide Biosynthesis in the Tetrachloroethene-Respiring Bacterium Sulfurospirillum multivorans.</title>
        <authorList>
            <person name="Keller S."/>
            <person name="Treder A."/>
            <person name="von Reuss S.H."/>
            <person name="Escalante-Semerena J.C."/>
            <person name="Schubert T."/>
        </authorList>
    </citation>
    <scope>FUNCTION</scope>
    <source>
        <strain evidence="4">DM 12446 / JCM 15788 / NBRC 109480</strain>
    </source>
</reference>
<reference evidence="9" key="3">
    <citation type="journal article" date="2019" name="FEBS Lett.">
        <title>Structural and functional analysis of an l-serine O-phosphate decarboxylase involved in norcobamide biosynthesis.</title>
        <authorList>
            <person name="Keller S."/>
            <person name="Wetterhorn K.M."/>
            <person name="Vecellio A."/>
            <person name="Seeger M."/>
            <person name="Rayment I."/>
            <person name="Schubert T."/>
        </authorList>
    </citation>
    <scope>X-RAY CRYSTALLOGRAPHY (1.94 ANGSTROMS) OF 2-392</scope>
    <scope>FUNCTION</scope>
    <scope>CATALYTIC ACTIVITY</scope>
    <scope>COFACTOR</scope>
    <scope>PATHWAY</scope>
    <scope>SUBUNIT</scope>
    <scope>REGION</scope>
    <scope>MUTAGENESIS OF 2-VAL--ASN-6; 2-VAL--GLN-11; 2-VAL--PHE-16; 2-VAL--GLN-21; 2-VAL--SER-29; HIS-26 AND SER-242</scope>
    <scope>PHYLOGENETIC ANALYSIS</scope>
    <source>
        <strain evidence="5">DM 12446 / JCM 15788 / NBRC 109480</strain>
    </source>
</reference>
<comment type="function">
    <text evidence="2 3">Pyridoxal phosphate (PLP)-dependent decarboxylase involved in the biosynthesis of norcobamides, cofactors in the tetrachloroethene reductive dehalogenase PceA of S.multivorans. Catalyzes the decarboxylation of L-serine O-phosphate to ethanolamine O-phosphate, the precursor for the linkage between the nucleotide loop and the corrin ring in norcobamide. Less active with L-threonine phosphate. No activity with L-serine or L-threonine. Has no aminotransferase activity as no production of L-glutamate with L-histidinol phosphate and 2-oxoglutarate as substrates (PubMed:31325159). Complements growth defects in the S.enterica cobD deletion mutant, but of the cobamides, the norpseudo-vitamin B12 (norpseudo-B12) rather than the pseudo-B12 is produced in the mutant. However, addition of L-threonine phosphate to the culture minimal medium of the mutant results in formation of also the pseudo-B12, indicating the dual substrate specificity of this enzyme (PubMed:27274028).</text>
</comment>
<comment type="catalytic activity">
    <reaction evidence="3">
        <text>O-phospho-L-serine + H(+) = phosphoethanolamine + CO2</text>
        <dbReference type="Rhea" id="RHEA:69548"/>
        <dbReference type="ChEBI" id="CHEBI:15378"/>
        <dbReference type="ChEBI" id="CHEBI:16526"/>
        <dbReference type="ChEBI" id="CHEBI:57524"/>
        <dbReference type="ChEBI" id="CHEBI:58190"/>
    </reaction>
</comment>
<comment type="cofactor">
    <cofactor evidence="3">
        <name>pyridoxal 5'-phosphate</name>
        <dbReference type="ChEBI" id="CHEBI:597326"/>
    </cofactor>
</comment>
<comment type="pathway">
    <text evidence="7">Cofactor biosynthesis.</text>
</comment>
<comment type="subunit">
    <text evidence="3">Homodimer.</text>
</comment>
<comment type="similarity">
    <text evidence="6">Belongs to the class-II pyridoxal-phosphate-dependent aminotransferase family.</text>
</comment>